<sequence length="695" mass="76592">MARQVSLKDTRNIGIMAHIDAGKTTVTERILYYSGKIHKIGDTHDGAAQMDWMVQEQERGITITSAATTCFWKGNRINIIDTPGHVDFTVEVERSLRVLDGSVALFDAKSGVEPQSETVWRQADKYGVPRICFINKMDATGADYFMSVDTIRERLRANAVPIEIPIGAEDKFVGVVDLITMKANIYKNELGTEFTVEEIPSDLVEVAEKYRAELLENIAEHDEELMEKYLEGEELTEEEIKRAIRTATIANAMNPVLCGSAYKNKGVQPLLDAIVDYMPAPIDVPDIKGVDPQTDEPTTRKSSDEEPFAALAFKIATDPYVGKLAFTRVYSGTVESGSYVYNSTKGKRERIGRILMMHANKREEIDKAYAGDIVAIIGLKDTTTGDTLCDMDSEVILENMEFPDPVISVAIEPKTKASQEKMGIALAKLAEEDPTFRTYTDEETGDTIISGMGELHLEIIVDRLLREFKVEANIGNPQVAYRESITQAAEAQGKYVKQSGGRGQYGDCTLRVEPLDNPEESNGIEFVNAIVGGAIPKEYIPSVQAGAEEAAQTGILGGYPMLDMKITLLDGSYHDVDSSEMAYKIAGSMGFRAAVAKAKPILLEPAMKVEITTPDEYLGDVMGDVSSRRGKIDGMNPKNGVHVLDAFIPLAEMFGYATDLRSKTQGRATYSMQFDHYEQVPNSISEEVIGKKNNK</sequence>
<reference key="1">
    <citation type="journal article" date="2008" name="DNA Res.">
        <title>Complete genome sequence of Finegoldia magna, an anaerobic opportunistic pathogen.</title>
        <authorList>
            <person name="Goto T."/>
            <person name="Yamashita A."/>
            <person name="Hirakawa H."/>
            <person name="Matsutani M."/>
            <person name="Todo K."/>
            <person name="Ohshima K."/>
            <person name="Toh H."/>
            <person name="Miyamoto K."/>
            <person name="Kuhara S."/>
            <person name="Hattori M."/>
            <person name="Shimizu T."/>
            <person name="Akimoto S."/>
        </authorList>
    </citation>
    <scope>NUCLEOTIDE SEQUENCE [LARGE SCALE GENOMIC DNA]</scope>
    <source>
        <strain>ATCC 29328 / DSM 20472 / WAL 2508</strain>
    </source>
</reference>
<name>EFG_FINM2</name>
<keyword id="KW-0963">Cytoplasm</keyword>
<keyword id="KW-0251">Elongation factor</keyword>
<keyword id="KW-0342">GTP-binding</keyword>
<keyword id="KW-0547">Nucleotide-binding</keyword>
<keyword id="KW-0648">Protein biosynthesis</keyword>
<keyword id="KW-1185">Reference proteome</keyword>
<proteinExistence type="inferred from homology"/>
<dbReference type="EMBL" id="AP008971">
    <property type="protein sequence ID" value="BAG07910.1"/>
    <property type="molecule type" value="Genomic_DNA"/>
</dbReference>
<dbReference type="RefSeq" id="WP_012290440.1">
    <property type="nucleotide sequence ID" value="NC_010376.1"/>
</dbReference>
<dbReference type="SMR" id="B0S0I4"/>
<dbReference type="STRING" id="334413.FMG_0492"/>
<dbReference type="KEGG" id="fma:FMG_0492"/>
<dbReference type="eggNOG" id="COG0480">
    <property type="taxonomic scope" value="Bacteria"/>
</dbReference>
<dbReference type="HOGENOM" id="CLU_002794_4_1_9"/>
<dbReference type="Proteomes" id="UP000001319">
    <property type="component" value="Chromosome"/>
</dbReference>
<dbReference type="GO" id="GO:0005737">
    <property type="term" value="C:cytoplasm"/>
    <property type="evidence" value="ECO:0007669"/>
    <property type="project" value="UniProtKB-SubCell"/>
</dbReference>
<dbReference type="GO" id="GO:0005525">
    <property type="term" value="F:GTP binding"/>
    <property type="evidence" value="ECO:0007669"/>
    <property type="project" value="UniProtKB-UniRule"/>
</dbReference>
<dbReference type="GO" id="GO:0003924">
    <property type="term" value="F:GTPase activity"/>
    <property type="evidence" value="ECO:0007669"/>
    <property type="project" value="InterPro"/>
</dbReference>
<dbReference type="GO" id="GO:0003746">
    <property type="term" value="F:translation elongation factor activity"/>
    <property type="evidence" value="ECO:0007669"/>
    <property type="project" value="UniProtKB-UniRule"/>
</dbReference>
<dbReference type="GO" id="GO:0032790">
    <property type="term" value="P:ribosome disassembly"/>
    <property type="evidence" value="ECO:0007669"/>
    <property type="project" value="TreeGrafter"/>
</dbReference>
<dbReference type="CDD" id="cd01886">
    <property type="entry name" value="EF-G"/>
    <property type="match status" value="1"/>
</dbReference>
<dbReference type="CDD" id="cd16262">
    <property type="entry name" value="EFG_III"/>
    <property type="match status" value="1"/>
</dbReference>
<dbReference type="CDD" id="cd01434">
    <property type="entry name" value="EFG_mtEFG1_IV"/>
    <property type="match status" value="1"/>
</dbReference>
<dbReference type="CDD" id="cd03713">
    <property type="entry name" value="EFG_mtEFG_C"/>
    <property type="match status" value="1"/>
</dbReference>
<dbReference type="CDD" id="cd04088">
    <property type="entry name" value="EFG_mtEFG_II"/>
    <property type="match status" value="1"/>
</dbReference>
<dbReference type="FunFam" id="2.40.30.10:FF:000006">
    <property type="entry name" value="Elongation factor G"/>
    <property type="match status" value="1"/>
</dbReference>
<dbReference type="FunFam" id="3.30.230.10:FF:000003">
    <property type="entry name" value="Elongation factor G"/>
    <property type="match status" value="1"/>
</dbReference>
<dbReference type="FunFam" id="3.30.70.240:FF:000001">
    <property type="entry name" value="Elongation factor G"/>
    <property type="match status" value="1"/>
</dbReference>
<dbReference type="FunFam" id="3.30.70.870:FF:000001">
    <property type="entry name" value="Elongation factor G"/>
    <property type="match status" value="1"/>
</dbReference>
<dbReference type="FunFam" id="3.40.50.300:FF:000029">
    <property type="entry name" value="Elongation factor G"/>
    <property type="match status" value="1"/>
</dbReference>
<dbReference type="Gene3D" id="3.30.230.10">
    <property type="match status" value="1"/>
</dbReference>
<dbReference type="Gene3D" id="3.30.70.240">
    <property type="match status" value="1"/>
</dbReference>
<dbReference type="Gene3D" id="3.30.70.870">
    <property type="entry name" value="Elongation Factor G (Translational Gtpase), domain 3"/>
    <property type="match status" value="1"/>
</dbReference>
<dbReference type="Gene3D" id="3.40.50.300">
    <property type="entry name" value="P-loop containing nucleotide triphosphate hydrolases"/>
    <property type="match status" value="1"/>
</dbReference>
<dbReference type="Gene3D" id="2.40.30.10">
    <property type="entry name" value="Translation factors"/>
    <property type="match status" value="1"/>
</dbReference>
<dbReference type="HAMAP" id="MF_00054_B">
    <property type="entry name" value="EF_G_EF_2_B"/>
    <property type="match status" value="1"/>
</dbReference>
<dbReference type="InterPro" id="IPR053905">
    <property type="entry name" value="EF-G-like_DII"/>
</dbReference>
<dbReference type="InterPro" id="IPR041095">
    <property type="entry name" value="EFG_II"/>
</dbReference>
<dbReference type="InterPro" id="IPR009022">
    <property type="entry name" value="EFG_III"/>
</dbReference>
<dbReference type="InterPro" id="IPR035647">
    <property type="entry name" value="EFG_III/V"/>
</dbReference>
<dbReference type="InterPro" id="IPR047872">
    <property type="entry name" value="EFG_IV"/>
</dbReference>
<dbReference type="InterPro" id="IPR035649">
    <property type="entry name" value="EFG_V"/>
</dbReference>
<dbReference type="InterPro" id="IPR000640">
    <property type="entry name" value="EFG_V-like"/>
</dbReference>
<dbReference type="InterPro" id="IPR031157">
    <property type="entry name" value="G_TR_CS"/>
</dbReference>
<dbReference type="InterPro" id="IPR027417">
    <property type="entry name" value="P-loop_NTPase"/>
</dbReference>
<dbReference type="InterPro" id="IPR020568">
    <property type="entry name" value="Ribosomal_Su5_D2-typ_SF"/>
</dbReference>
<dbReference type="InterPro" id="IPR014721">
    <property type="entry name" value="Ribsml_uS5_D2-typ_fold_subgr"/>
</dbReference>
<dbReference type="InterPro" id="IPR005225">
    <property type="entry name" value="Small_GTP-bd"/>
</dbReference>
<dbReference type="InterPro" id="IPR000795">
    <property type="entry name" value="T_Tr_GTP-bd_dom"/>
</dbReference>
<dbReference type="InterPro" id="IPR009000">
    <property type="entry name" value="Transl_B-barrel_sf"/>
</dbReference>
<dbReference type="InterPro" id="IPR004540">
    <property type="entry name" value="Transl_elong_EFG/EF2"/>
</dbReference>
<dbReference type="InterPro" id="IPR005517">
    <property type="entry name" value="Transl_elong_EFG/EF2_IV"/>
</dbReference>
<dbReference type="NCBIfam" id="TIGR00484">
    <property type="entry name" value="EF-G"/>
    <property type="match status" value="1"/>
</dbReference>
<dbReference type="NCBIfam" id="NF009379">
    <property type="entry name" value="PRK12740.1-3"/>
    <property type="match status" value="1"/>
</dbReference>
<dbReference type="NCBIfam" id="NF009381">
    <property type="entry name" value="PRK12740.1-5"/>
    <property type="match status" value="1"/>
</dbReference>
<dbReference type="NCBIfam" id="TIGR00231">
    <property type="entry name" value="small_GTP"/>
    <property type="match status" value="1"/>
</dbReference>
<dbReference type="PANTHER" id="PTHR43261:SF1">
    <property type="entry name" value="RIBOSOME-RELEASING FACTOR 2, MITOCHONDRIAL"/>
    <property type="match status" value="1"/>
</dbReference>
<dbReference type="PANTHER" id="PTHR43261">
    <property type="entry name" value="TRANSLATION ELONGATION FACTOR G-RELATED"/>
    <property type="match status" value="1"/>
</dbReference>
<dbReference type="Pfam" id="PF22042">
    <property type="entry name" value="EF-G_D2"/>
    <property type="match status" value="1"/>
</dbReference>
<dbReference type="Pfam" id="PF00679">
    <property type="entry name" value="EFG_C"/>
    <property type="match status" value="1"/>
</dbReference>
<dbReference type="Pfam" id="PF14492">
    <property type="entry name" value="EFG_III"/>
    <property type="match status" value="1"/>
</dbReference>
<dbReference type="Pfam" id="PF03764">
    <property type="entry name" value="EFG_IV"/>
    <property type="match status" value="1"/>
</dbReference>
<dbReference type="Pfam" id="PF00009">
    <property type="entry name" value="GTP_EFTU"/>
    <property type="match status" value="1"/>
</dbReference>
<dbReference type="PRINTS" id="PR00315">
    <property type="entry name" value="ELONGATNFCT"/>
</dbReference>
<dbReference type="SMART" id="SM00838">
    <property type="entry name" value="EFG_C"/>
    <property type="match status" value="1"/>
</dbReference>
<dbReference type="SMART" id="SM00889">
    <property type="entry name" value="EFG_IV"/>
    <property type="match status" value="1"/>
</dbReference>
<dbReference type="SUPFAM" id="SSF54980">
    <property type="entry name" value="EF-G C-terminal domain-like"/>
    <property type="match status" value="2"/>
</dbReference>
<dbReference type="SUPFAM" id="SSF52540">
    <property type="entry name" value="P-loop containing nucleoside triphosphate hydrolases"/>
    <property type="match status" value="1"/>
</dbReference>
<dbReference type="SUPFAM" id="SSF54211">
    <property type="entry name" value="Ribosomal protein S5 domain 2-like"/>
    <property type="match status" value="1"/>
</dbReference>
<dbReference type="SUPFAM" id="SSF50447">
    <property type="entry name" value="Translation proteins"/>
    <property type="match status" value="1"/>
</dbReference>
<dbReference type="PROSITE" id="PS00301">
    <property type="entry name" value="G_TR_1"/>
    <property type="match status" value="1"/>
</dbReference>
<dbReference type="PROSITE" id="PS51722">
    <property type="entry name" value="G_TR_2"/>
    <property type="match status" value="1"/>
</dbReference>
<accession>B0S0I4</accession>
<organism>
    <name type="scientific">Finegoldia magna (strain ATCC 29328 / DSM 20472 / WAL 2508)</name>
    <name type="common">Peptostreptococcus magnus</name>
    <dbReference type="NCBI Taxonomy" id="334413"/>
    <lineage>
        <taxon>Bacteria</taxon>
        <taxon>Bacillati</taxon>
        <taxon>Bacillota</taxon>
        <taxon>Tissierellia</taxon>
        <taxon>Tissierellales</taxon>
        <taxon>Peptoniphilaceae</taxon>
        <taxon>Finegoldia</taxon>
    </lineage>
</organism>
<evidence type="ECO:0000255" key="1">
    <source>
        <dbReference type="HAMAP-Rule" id="MF_00054"/>
    </source>
</evidence>
<evidence type="ECO:0000256" key="2">
    <source>
        <dbReference type="SAM" id="MobiDB-lite"/>
    </source>
</evidence>
<feature type="chain" id="PRO_1000091712" description="Elongation factor G">
    <location>
        <begin position="1"/>
        <end position="695"/>
    </location>
</feature>
<feature type="domain" description="tr-type G">
    <location>
        <begin position="8"/>
        <end position="282"/>
    </location>
</feature>
<feature type="region of interest" description="Disordered" evidence="2">
    <location>
        <begin position="285"/>
        <end position="304"/>
    </location>
</feature>
<feature type="binding site" evidence="1">
    <location>
        <begin position="17"/>
        <end position="24"/>
    </location>
    <ligand>
        <name>GTP</name>
        <dbReference type="ChEBI" id="CHEBI:37565"/>
    </ligand>
</feature>
<feature type="binding site" evidence="1">
    <location>
        <begin position="81"/>
        <end position="85"/>
    </location>
    <ligand>
        <name>GTP</name>
        <dbReference type="ChEBI" id="CHEBI:37565"/>
    </ligand>
</feature>
<feature type="binding site" evidence="1">
    <location>
        <begin position="135"/>
        <end position="138"/>
    </location>
    <ligand>
        <name>GTP</name>
        <dbReference type="ChEBI" id="CHEBI:37565"/>
    </ligand>
</feature>
<comment type="function">
    <text evidence="1">Catalyzes the GTP-dependent ribosomal translocation step during translation elongation. During this step, the ribosome changes from the pre-translocational (PRE) to the post-translocational (POST) state as the newly formed A-site-bound peptidyl-tRNA and P-site-bound deacylated tRNA move to the P and E sites, respectively. Catalyzes the coordinated movement of the two tRNA molecules, the mRNA and conformational changes in the ribosome.</text>
</comment>
<comment type="subcellular location">
    <subcellularLocation>
        <location evidence="1">Cytoplasm</location>
    </subcellularLocation>
</comment>
<comment type="similarity">
    <text evidence="1">Belongs to the TRAFAC class translation factor GTPase superfamily. Classic translation factor GTPase family. EF-G/EF-2 subfamily.</text>
</comment>
<protein>
    <recommendedName>
        <fullName evidence="1">Elongation factor G</fullName>
        <shortName evidence="1">EF-G</shortName>
    </recommendedName>
</protein>
<gene>
    <name evidence="1" type="primary">fusA</name>
    <name type="ordered locus">FMG_0492</name>
</gene>